<keyword id="KW-0004">4Fe-4S</keyword>
<keyword id="KW-0408">Iron</keyword>
<keyword id="KW-0411">Iron-sulfur</keyword>
<keyword id="KW-0479">Metal-binding</keyword>
<keyword id="KW-0500">Molybdenum</keyword>
<keyword id="KW-0560">Oxidoreductase</keyword>
<keyword id="KW-1185">Reference proteome</keyword>
<keyword id="KW-0964">Secreted</keyword>
<keyword id="KW-0732">Signal</keyword>
<accession>A0A0A8X0K1</accession>
<accession>E9RFD1</accession>
<protein>
    <recommendedName>
        <fullName evidence="6">Selenate reductase subunit A</fullName>
        <ecNumber evidence="7">1.97.1.14</ecNumber>
    </recommendedName>
</protein>
<evidence type="ECO:0000250" key="1">
    <source>
        <dbReference type="UniProtKB" id="Q7WTU0"/>
    </source>
</evidence>
<evidence type="ECO:0000255" key="2">
    <source>
        <dbReference type="PROSITE-ProRule" id="PRU00648"/>
    </source>
</evidence>
<evidence type="ECO:0000255" key="3">
    <source>
        <dbReference type="PROSITE-ProRule" id="PRU01004"/>
    </source>
</evidence>
<evidence type="ECO:0000269" key="4">
    <source>
    </source>
</evidence>
<evidence type="ECO:0000303" key="5">
    <source>
    </source>
</evidence>
<evidence type="ECO:0000305" key="6"/>
<evidence type="ECO:0000305" key="7">
    <source>
    </source>
</evidence>
<evidence type="ECO:0000312" key="8">
    <source>
        <dbReference type="EMBL" id="BAJ83594.1"/>
    </source>
</evidence>
<evidence type="ECO:0000312" key="9">
    <source>
        <dbReference type="EMBL" id="GAM13408.1"/>
    </source>
</evidence>
<gene>
    <name evidence="5" type="primary">srdA</name>
    <name evidence="9" type="ORF">SAMD00020551_1552</name>
</gene>
<name>SRDA_MESS1</name>
<feature type="signal peptide" description="Tat-type signal" evidence="2">
    <location>
        <begin position="1"/>
        <end position="39"/>
    </location>
</feature>
<feature type="chain" id="PRO_0000461864" description="Selenate reductase subunit A" evidence="2">
    <location>
        <begin position="40"/>
        <end position="1048"/>
    </location>
</feature>
<feature type="domain" description="4Fe-4S Mo/W bis-MGD-type" evidence="3">
    <location>
        <begin position="56"/>
        <end position="129"/>
    </location>
</feature>
<feature type="binding site" evidence="3">
    <location>
        <position position="63"/>
    </location>
    <ligand>
        <name>[4Fe-4S] cluster</name>
        <dbReference type="ChEBI" id="CHEBI:49883"/>
    </ligand>
</feature>
<feature type="binding site" evidence="3">
    <location>
        <position position="66"/>
    </location>
    <ligand>
        <name>[4Fe-4S] cluster</name>
        <dbReference type="ChEBI" id="CHEBI:49883"/>
    </ligand>
</feature>
<feature type="binding site" evidence="3">
    <location>
        <position position="70"/>
    </location>
    <ligand>
        <name>[4Fe-4S] cluster</name>
        <dbReference type="ChEBI" id="CHEBI:49883"/>
    </ligand>
</feature>
<feature type="binding site" evidence="3">
    <location>
        <position position="115"/>
    </location>
    <ligand>
        <name>[4Fe-4S] cluster</name>
        <dbReference type="ChEBI" id="CHEBI:49883"/>
    </ligand>
</feature>
<feature type="binding site" evidence="1">
    <location>
        <position position="270"/>
    </location>
    <ligand>
        <name>Mo-bis(molybdopterin guanine dinucleotide)</name>
        <dbReference type="ChEBI" id="CHEBI:60539"/>
    </ligand>
    <ligandPart>
        <name>Mo</name>
        <dbReference type="ChEBI" id="CHEBI:28685"/>
    </ligandPart>
</feature>
<reference evidence="8" key="1">
    <citation type="journal article" date="2011" name="J. Bacteriol.">
        <title>Molecular cloning and characterization of the srdBCA operon, encoding the respiratory selenate reductase complex, from the selenate-reducing bacterium Bacillus selenatarsenatis SF-1.</title>
        <authorList>
            <person name="Kuroda M."/>
            <person name="Yamashita M."/>
            <person name="Miwa E."/>
            <person name="Imao K."/>
            <person name="Fujimoto N."/>
            <person name="Ono H."/>
            <person name="Nagano K."/>
            <person name="Sei K."/>
            <person name="Ike M."/>
        </authorList>
    </citation>
    <scope>NUCLEOTIDE SEQUENCE [GENOMIC DNA]</scope>
    <scope>FUNCTION AS A SELENATE REDUCTASE</scope>
    <scope>SUBUNIT</scope>
    <scope>DISRUPTION PHENOTYPE</scope>
    <source>
        <strain>DSM 18680 / JCM 14380 / FERM P-15431 / SF-1</strain>
    </source>
</reference>
<reference evidence="9" key="2">
    <citation type="journal article" date="2015" name="Genome Announc.">
        <title>Draft Genome Sequence of Bacillus selenatarsenatis SF-1, a Promising Agent for Bioremediation of Environments Contaminated with Selenium and Arsenic.</title>
        <authorList>
            <person name="Kuroda M."/>
            <person name="Ayano H."/>
            <person name="Sei K."/>
            <person name="Yamashita M."/>
            <person name="Ike M."/>
        </authorList>
    </citation>
    <scope>NUCLEOTIDE SEQUENCE [LARGE SCALE GENOMIC DNA]</scope>
    <source>
        <strain>DSM 18680 / JCM 14380 / FERM P-15431 / SF-1</strain>
    </source>
</reference>
<organism>
    <name type="scientific">Mesobacillus selenatarsenatis (strain DSM 18680 / JCM 14380 / FERM P-15431 / SF-1)</name>
    <dbReference type="NCBI Taxonomy" id="1321606"/>
    <lineage>
        <taxon>Bacteria</taxon>
        <taxon>Bacillati</taxon>
        <taxon>Bacillota</taxon>
        <taxon>Bacilli</taxon>
        <taxon>Bacillales</taxon>
        <taxon>Bacillaceae</taxon>
        <taxon>Mesobacillus</taxon>
    </lineage>
</organism>
<dbReference type="EC" id="1.97.1.14" evidence="7"/>
<dbReference type="EMBL" id="AB534554">
    <property type="protein sequence ID" value="BAJ83594.1"/>
    <property type="molecule type" value="Genomic_DNA"/>
</dbReference>
<dbReference type="EMBL" id="BASE01000031">
    <property type="protein sequence ID" value="GAM13408.1"/>
    <property type="molecule type" value="Genomic_DNA"/>
</dbReference>
<dbReference type="RefSeq" id="WP_041965253.1">
    <property type="nucleotide sequence ID" value="NZ_BASE01000031.1"/>
</dbReference>
<dbReference type="STRING" id="1321606.SAMD00020551_1552"/>
<dbReference type="KEGG" id="ag:BAJ83594"/>
<dbReference type="OrthoDB" id="9805142at2"/>
<dbReference type="BRENDA" id="1.97.1.9">
    <property type="organism ID" value="13649"/>
</dbReference>
<dbReference type="Proteomes" id="UP000031014">
    <property type="component" value="Unassembled WGS sequence"/>
</dbReference>
<dbReference type="GO" id="GO:0005576">
    <property type="term" value="C:extracellular region"/>
    <property type="evidence" value="ECO:0007669"/>
    <property type="project" value="UniProtKB-SubCell"/>
</dbReference>
<dbReference type="GO" id="GO:0051539">
    <property type="term" value="F:4 iron, 4 sulfur cluster binding"/>
    <property type="evidence" value="ECO:0007669"/>
    <property type="project" value="UniProtKB-KW"/>
</dbReference>
<dbReference type="GO" id="GO:0046872">
    <property type="term" value="F:metal ion binding"/>
    <property type="evidence" value="ECO:0007669"/>
    <property type="project" value="UniProtKB-KW"/>
</dbReference>
<dbReference type="GO" id="GO:0043546">
    <property type="term" value="F:molybdopterin cofactor binding"/>
    <property type="evidence" value="ECO:0007669"/>
    <property type="project" value="InterPro"/>
</dbReference>
<dbReference type="GO" id="GO:0016491">
    <property type="term" value="F:oxidoreductase activity"/>
    <property type="evidence" value="ECO:0007669"/>
    <property type="project" value="UniProtKB-KW"/>
</dbReference>
<dbReference type="Gene3D" id="2.40.40.20">
    <property type="match status" value="1"/>
</dbReference>
<dbReference type="Gene3D" id="3.30.200.210">
    <property type="match status" value="1"/>
</dbReference>
<dbReference type="Gene3D" id="3.40.50.740">
    <property type="match status" value="1"/>
</dbReference>
<dbReference type="Gene3D" id="3.40.228.10">
    <property type="entry name" value="Dimethylsulfoxide Reductase, domain 2"/>
    <property type="match status" value="1"/>
</dbReference>
<dbReference type="InterPro" id="IPR009010">
    <property type="entry name" value="Asp_de-COase-like_dom_sf"/>
</dbReference>
<dbReference type="InterPro" id="IPR006657">
    <property type="entry name" value="MoPterin_dinucl-bd_dom"/>
</dbReference>
<dbReference type="InterPro" id="IPR006656">
    <property type="entry name" value="Mopterin_OxRdtase"/>
</dbReference>
<dbReference type="InterPro" id="IPR006963">
    <property type="entry name" value="Mopterin_OxRdtase_4Fe-4S_dom"/>
</dbReference>
<dbReference type="InterPro" id="IPR050612">
    <property type="entry name" value="Prok_Mopterin_Oxidored"/>
</dbReference>
<dbReference type="InterPro" id="IPR006311">
    <property type="entry name" value="TAT_signal"/>
</dbReference>
<dbReference type="InterPro" id="IPR019546">
    <property type="entry name" value="TAT_signal_bac_arc"/>
</dbReference>
<dbReference type="NCBIfam" id="TIGR01409">
    <property type="entry name" value="TAT_signal_seq"/>
    <property type="match status" value="1"/>
</dbReference>
<dbReference type="PANTHER" id="PTHR43742:SF9">
    <property type="entry name" value="TETRATHIONATE REDUCTASE SUBUNIT A"/>
    <property type="match status" value="1"/>
</dbReference>
<dbReference type="PANTHER" id="PTHR43742">
    <property type="entry name" value="TRIMETHYLAMINE-N-OXIDE REDUCTASE"/>
    <property type="match status" value="1"/>
</dbReference>
<dbReference type="Pfam" id="PF04879">
    <property type="entry name" value="Molybdop_Fe4S4"/>
    <property type="match status" value="1"/>
</dbReference>
<dbReference type="Pfam" id="PF00384">
    <property type="entry name" value="Molybdopterin"/>
    <property type="match status" value="1"/>
</dbReference>
<dbReference type="Pfam" id="PF01568">
    <property type="entry name" value="Molydop_binding"/>
    <property type="match status" value="1"/>
</dbReference>
<dbReference type="SMART" id="SM00926">
    <property type="entry name" value="Molybdop_Fe4S4"/>
    <property type="match status" value="1"/>
</dbReference>
<dbReference type="SUPFAM" id="SSF50692">
    <property type="entry name" value="ADC-like"/>
    <property type="match status" value="1"/>
</dbReference>
<dbReference type="SUPFAM" id="SSF53706">
    <property type="entry name" value="Formate dehydrogenase/DMSO reductase, domains 1-3"/>
    <property type="match status" value="1"/>
</dbReference>
<dbReference type="PROSITE" id="PS51669">
    <property type="entry name" value="4FE4S_MOW_BIS_MGD"/>
    <property type="match status" value="1"/>
</dbReference>
<dbReference type="PROSITE" id="PS00551">
    <property type="entry name" value="MOLYBDOPTERIN_PROK_1"/>
    <property type="match status" value="1"/>
</dbReference>
<dbReference type="PROSITE" id="PS51318">
    <property type="entry name" value="TAT"/>
    <property type="match status" value="1"/>
</dbReference>
<proteinExistence type="evidence at protein level"/>
<sequence length="1048" mass="116843">MENQHQKFISRRNFIKTSALLGGTAFLGTGLPNIKKTYSKELDYVGNFEYPLAKPENILYSACLQCTVACSIKVKINNGVCMKIDGNPYSAMNLGENLPYDLSPKEAVSIDGKLCPKGQAGIQHAYDPYRLRKVIKRDGPRGSGKWKTIPYDQAIDEIVNGGNIFKDIGENQNVEGLKDIFVLKDPKVAKAMADDVTKIRKKEMTVDEFKAKHKDNLDVLIDPNHPDLGPKNNQFLFQVGRIHNGRIEFTKRFVNDSFGSVNWIEKTTLCGQTSNKAWVHSTREYLEGKWTGGIKSPRPDHRNTEFLLVFGSIVFEANYGPVQETEPITEGLESGRLKIAVVDPRLTKVASKAWKWVPIKPGNDAAFALGMIRWIIENERYDTKFLQNATRLAATNSDEPSYSNATYLVKVEKDGRAAKHLRANEIGIGTEKEFVVISNGKPAAVDPENSNLAIQGELFVDTNLEGIKVKSPLQLIKEEAYSKELAEWAELSGAKQKDIEDISKEFTSHGKKAAVEFYRGAIKHTNGWYNGQALIVLNHLIGNMNWQGGISNTGGGWSYIGDKEGQPYPMANLHPNKLSKFGVPITKEGWKYEESTLFEGYPAKRPWYPFSGNVAQETWPSISDGYPYKIKAALISSHSPMYSLPGGHVQLKTLLDTEKVPLLIASDIVIGDSSQYVDYIFPDLTYLERWATPGQSHHIRVKVNQVRQPVIAPLTENATVFGEEVPISLEALMMSISEKVGLSGFGKDAFGPGKDLNRMEDFYLKLVANIASGNKQGELVKAADSEEMELFKSSHRHLPKTVYDIEKWQQTLTSDEWKRVVYVLNRGGRFASSDDAYEGSFIKKKIPGLARLYLEEIADSRNSISGNYFTGYPKYLPIMDMAENLINDEGEFHLITNKEVFGTQSRTITNYWAQLALQPENFVVLNSVDAKKLKVDNGDKVLVTSTSNPKGEHLIAADESRPTIGKVKIVEGIRPGVVAISTHYGHWGYGARDIQIDGEVVKGEEVRGLGIHPNPLFRLDDNLRGTTLSDPIGGSASYYDTRVNIQRV</sequence>
<comment type="function">
    <text evidence="4 7">Component of the respiratory selenate reductase complex, which catalyzes the reduction of selenate to selenite (PubMed:21357486). SrdA is probably the catalytic subunit that reduces selenate (Probable).</text>
</comment>
<comment type="catalytic activity">
    <reaction evidence="7">
        <text>selenite + a quinone + H2O = selenate + a quinol</text>
        <dbReference type="Rhea" id="RHEA:51636"/>
        <dbReference type="ChEBI" id="CHEBI:15075"/>
        <dbReference type="ChEBI" id="CHEBI:15377"/>
        <dbReference type="ChEBI" id="CHEBI:18212"/>
        <dbReference type="ChEBI" id="CHEBI:24646"/>
        <dbReference type="ChEBI" id="CHEBI:132124"/>
        <dbReference type="EC" id="1.97.1.14"/>
    </reaction>
</comment>
<comment type="cofactor">
    <cofactor evidence="1">
        <name>[4Fe-4S] cluster</name>
        <dbReference type="ChEBI" id="CHEBI:49883"/>
    </cofactor>
    <text evidence="1">Binds 1 [4Fe-4S] cluster.</text>
</comment>
<comment type="cofactor">
    <cofactor evidence="1">
        <name>Mo-bis(molybdopterin guanine dinucleotide)</name>
        <dbReference type="ChEBI" id="CHEBI:60539"/>
    </cofactor>
    <text evidence="1">Binds 1 molybdenum-bis(molybdopterin guanine dinucleotide) (Mo-bis-MGD) cofactor per subunit.</text>
</comment>
<comment type="subunit">
    <text evidence="4">The complex is composed of three subunits: SrdA, SrdB and SrdC.</text>
</comment>
<comment type="subcellular location">
    <subcellularLocation>
        <location evidence="7">Secreted</location>
    </subcellularLocation>
    <text evidence="7">SrdA, SrdB and SrdC probably form a membrane-bound complex facing the extracytoplasmic side of the cell.</text>
</comment>
<comment type="PTM">
    <text evidence="2">Predicted to be exported by the Tat system. The position of the signal peptide cleavage has not been experimentally proven.</text>
</comment>
<comment type="disruption phenotype">
    <text evidence="4">Disruption of the gene abolishes selenate reduction but does not affect nitrate and arsenate reduction (PubMed:21357486). Selenite reduction is decreased, but not significantly (PubMed:21357486). The mutant cannot grow with selenate as a sole electron acceptor (PubMed:21357486).</text>
</comment>
<comment type="similarity">
    <text evidence="6">Belongs to the prokaryotic molybdopterin-containing oxidoreductase family.</text>
</comment>